<name>UBIE_SHEPA</name>
<proteinExistence type="inferred from homology"/>
<protein>
    <recommendedName>
        <fullName evidence="1">Ubiquinone/menaquinone biosynthesis C-methyltransferase UbiE</fullName>
        <ecNumber evidence="1">2.1.1.163</ecNumber>
        <ecNumber evidence="1">2.1.1.201</ecNumber>
    </recommendedName>
    <alternativeName>
        <fullName evidence="1">2-methoxy-6-polyprenyl-1,4-benzoquinol methylase</fullName>
    </alternativeName>
    <alternativeName>
        <fullName evidence="1">Demethylmenaquinone methyltransferase</fullName>
    </alternativeName>
</protein>
<accession>A8H966</accession>
<gene>
    <name evidence="1" type="primary">ubiE</name>
    <name type="ordered locus">Spea_3792</name>
</gene>
<evidence type="ECO:0000255" key="1">
    <source>
        <dbReference type="HAMAP-Rule" id="MF_01813"/>
    </source>
</evidence>
<reference key="1">
    <citation type="submission" date="2007-10" db="EMBL/GenBank/DDBJ databases">
        <title>Complete sequence of Shewanella pealeana ATCC 700345.</title>
        <authorList>
            <consortium name="US DOE Joint Genome Institute"/>
            <person name="Copeland A."/>
            <person name="Lucas S."/>
            <person name="Lapidus A."/>
            <person name="Barry K."/>
            <person name="Glavina del Rio T."/>
            <person name="Dalin E."/>
            <person name="Tice H."/>
            <person name="Pitluck S."/>
            <person name="Chertkov O."/>
            <person name="Brettin T."/>
            <person name="Bruce D."/>
            <person name="Detter J.C."/>
            <person name="Han C."/>
            <person name="Schmutz J."/>
            <person name="Larimer F."/>
            <person name="Land M."/>
            <person name="Hauser L."/>
            <person name="Kyrpides N."/>
            <person name="Kim E."/>
            <person name="Zhao J.-S.Z."/>
            <person name="Manno D."/>
            <person name="Hawari J."/>
            <person name="Richardson P."/>
        </authorList>
    </citation>
    <scope>NUCLEOTIDE SEQUENCE [LARGE SCALE GENOMIC DNA]</scope>
    <source>
        <strain>ATCC 700345 / ANG-SQ1</strain>
    </source>
</reference>
<comment type="function">
    <text evidence="1">Methyltransferase required for the conversion of demethylmenaquinol (DMKH2) to menaquinol (MKH2) and the conversion of 2-polyprenyl-6-methoxy-1,4-benzoquinol (DDMQH2) to 2-polyprenyl-3-methyl-6-methoxy-1,4-benzoquinol (DMQH2).</text>
</comment>
<comment type="catalytic activity">
    <reaction evidence="1">
        <text>a 2-demethylmenaquinol + S-adenosyl-L-methionine = a menaquinol + S-adenosyl-L-homocysteine + H(+)</text>
        <dbReference type="Rhea" id="RHEA:42640"/>
        <dbReference type="Rhea" id="RHEA-COMP:9539"/>
        <dbReference type="Rhea" id="RHEA-COMP:9563"/>
        <dbReference type="ChEBI" id="CHEBI:15378"/>
        <dbReference type="ChEBI" id="CHEBI:18151"/>
        <dbReference type="ChEBI" id="CHEBI:55437"/>
        <dbReference type="ChEBI" id="CHEBI:57856"/>
        <dbReference type="ChEBI" id="CHEBI:59789"/>
        <dbReference type="EC" id="2.1.1.163"/>
    </reaction>
</comment>
<comment type="catalytic activity">
    <reaction evidence="1">
        <text>a 2-methoxy-6-(all-trans-polyprenyl)benzene-1,4-diol + S-adenosyl-L-methionine = a 5-methoxy-2-methyl-3-(all-trans-polyprenyl)benzene-1,4-diol + S-adenosyl-L-homocysteine + H(+)</text>
        <dbReference type="Rhea" id="RHEA:28286"/>
        <dbReference type="Rhea" id="RHEA-COMP:10858"/>
        <dbReference type="Rhea" id="RHEA-COMP:10859"/>
        <dbReference type="ChEBI" id="CHEBI:15378"/>
        <dbReference type="ChEBI" id="CHEBI:57856"/>
        <dbReference type="ChEBI" id="CHEBI:59789"/>
        <dbReference type="ChEBI" id="CHEBI:84166"/>
        <dbReference type="ChEBI" id="CHEBI:84167"/>
        <dbReference type="EC" id="2.1.1.201"/>
    </reaction>
</comment>
<comment type="pathway">
    <text evidence="1">Quinol/quinone metabolism; menaquinone biosynthesis; menaquinol from 1,4-dihydroxy-2-naphthoate: step 2/2.</text>
</comment>
<comment type="pathway">
    <text evidence="1">Cofactor biosynthesis; ubiquinone biosynthesis.</text>
</comment>
<comment type="similarity">
    <text evidence="1">Belongs to the class I-like SAM-binding methyltransferase superfamily. MenG/UbiE family.</text>
</comment>
<feature type="chain" id="PRO_1000088297" description="Ubiquinone/menaquinone biosynthesis C-methyltransferase UbiE">
    <location>
        <begin position="1"/>
        <end position="251"/>
    </location>
</feature>
<feature type="binding site" evidence="1">
    <location>
        <position position="74"/>
    </location>
    <ligand>
        <name>S-adenosyl-L-methionine</name>
        <dbReference type="ChEBI" id="CHEBI:59789"/>
    </ligand>
</feature>
<feature type="binding site" evidence="1">
    <location>
        <position position="95"/>
    </location>
    <ligand>
        <name>S-adenosyl-L-methionine</name>
        <dbReference type="ChEBI" id="CHEBI:59789"/>
    </ligand>
</feature>
<feature type="binding site" evidence="1">
    <location>
        <begin position="123"/>
        <end position="124"/>
    </location>
    <ligand>
        <name>S-adenosyl-L-methionine</name>
        <dbReference type="ChEBI" id="CHEBI:59789"/>
    </ligand>
</feature>
<sequence length="251" mass="27930">MSDDSSNSTHFGYKTVEAEKKADMVAGVFHSVAAKYDIMNDVMSFGIHRMWKRFTIESAGARPGMKVLDLAGGTGDLTAKFSRIVGETGQVTLADINDSMLKVGREKLRDKGIVGNVNYVQANAEALPFPDNHFDIITIAFGLRNVTNKDAAIASMLRVLKPGGKLLVLEFSKPQHEIMRKIYDIYSFKVLPKMGSLITKDADSYEYLAESIRMHPDQDTLKQMMEDAGFEQVNYTNMTDGIVALHKGYKF</sequence>
<dbReference type="EC" id="2.1.1.163" evidence="1"/>
<dbReference type="EC" id="2.1.1.201" evidence="1"/>
<dbReference type="EMBL" id="CP000851">
    <property type="protein sequence ID" value="ABV89103.1"/>
    <property type="molecule type" value="Genomic_DNA"/>
</dbReference>
<dbReference type="RefSeq" id="WP_012156985.1">
    <property type="nucleotide sequence ID" value="NC_009901.1"/>
</dbReference>
<dbReference type="SMR" id="A8H966"/>
<dbReference type="STRING" id="398579.Spea_3792"/>
<dbReference type="KEGG" id="spl:Spea_3792"/>
<dbReference type="eggNOG" id="COG2226">
    <property type="taxonomic scope" value="Bacteria"/>
</dbReference>
<dbReference type="HOGENOM" id="CLU_037990_0_0_6"/>
<dbReference type="OrthoDB" id="9808140at2"/>
<dbReference type="UniPathway" id="UPA00079">
    <property type="reaction ID" value="UER00169"/>
</dbReference>
<dbReference type="UniPathway" id="UPA00232"/>
<dbReference type="Proteomes" id="UP000002608">
    <property type="component" value="Chromosome"/>
</dbReference>
<dbReference type="GO" id="GO:0008425">
    <property type="term" value="F:2-methoxy-6-polyprenyl-1,4-benzoquinol methyltransferase activity"/>
    <property type="evidence" value="ECO:0007669"/>
    <property type="project" value="UniProtKB-UniRule"/>
</dbReference>
<dbReference type="GO" id="GO:0043770">
    <property type="term" value="F:demethylmenaquinone methyltransferase activity"/>
    <property type="evidence" value="ECO:0007669"/>
    <property type="project" value="UniProtKB-UniRule"/>
</dbReference>
<dbReference type="GO" id="GO:0009060">
    <property type="term" value="P:aerobic respiration"/>
    <property type="evidence" value="ECO:0007669"/>
    <property type="project" value="UniProtKB-UniRule"/>
</dbReference>
<dbReference type="GO" id="GO:0009234">
    <property type="term" value="P:menaquinone biosynthetic process"/>
    <property type="evidence" value="ECO:0007669"/>
    <property type="project" value="UniProtKB-UniRule"/>
</dbReference>
<dbReference type="GO" id="GO:0032259">
    <property type="term" value="P:methylation"/>
    <property type="evidence" value="ECO:0007669"/>
    <property type="project" value="UniProtKB-KW"/>
</dbReference>
<dbReference type="CDD" id="cd02440">
    <property type="entry name" value="AdoMet_MTases"/>
    <property type="match status" value="1"/>
</dbReference>
<dbReference type="FunFam" id="3.40.50.150:FF:000014">
    <property type="entry name" value="Ubiquinone/menaquinone biosynthesis C-methyltransferase UbiE"/>
    <property type="match status" value="1"/>
</dbReference>
<dbReference type="Gene3D" id="3.40.50.150">
    <property type="entry name" value="Vaccinia Virus protein VP39"/>
    <property type="match status" value="1"/>
</dbReference>
<dbReference type="HAMAP" id="MF_01813">
    <property type="entry name" value="MenG_UbiE_methyltr"/>
    <property type="match status" value="1"/>
</dbReference>
<dbReference type="InterPro" id="IPR029063">
    <property type="entry name" value="SAM-dependent_MTases_sf"/>
</dbReference>
<dbReference type="InterPro" id="IPR004033">
    <property type="entry name" value="UbiE/COQ5_MeTrFase"/>
</dbReference>
<dbReference type="InterPro" id="IPR023576">
    <property type="entry name" value="UbiE/COQ5_MeTrFase_CS"/>
</dbReference>
<dbReference type="NCBIfam" id="TIGR01934">
    <property type="entry name" value="MenG_MenH_UbiE"/>
    <property type="match status" value="1"/>
</dbReference>
<dbReference type="NCBIfam" id="NF001240">
    <property type="entry name" value="PRK00216.1-1"/>
    <property type="match status" value="1"/>
</dbReference>
<dbReference type="NCBIfam" id="NF001242">
    <property type="entry name" value="PRK00216.1-3"/>
    <property type="match status" value="1"/>
</dbReference>
<dbReference type="NCBIfam" id="NF001244">
    <property type="entry name" value="PRK00216.1-5"/>
    <property type="match status" value="1"/>
</dbReference>
<dbReference type="PANTHER" id="PTHR43591:SF24">
    <property type="entry name" value="2-METHOXY-6-POLYPRENYL-1,4-BENZOQUINOL METHYLASE, MITOCHONDRIAL"/>
    <property type="match status" value="1"/>
</dbReference>
<dbReference type="PANTHER" id="PTHR43591">
    <property type="entry name" value="METHYLTRANSFERASE"/>
    <property type="match status" value="1"/>
</dbReference>
<dbReference type="Pfam" id="PF01209">
    <property type="entry name" value="Ubie_methyltran"/>
    <property type="match status" value="1"/>
</dbReference>
<dbReference type="SUPFAM" id="SSF53335">
    <property type="entry name" value="S-adenosyl-L-methionine-dependent methyltransferases"/>
    <property type="match status" value="1"/>
</dbReference>
<dbReference type="PROSITE" id="PS51608">
    <property type="entry name" value="SAM_MT_UBIE"/>
    <property type="match status" value="1"/>
</dbReference>
<dbReference type="PROSITE" id="PS01183">
    <property type="entry name" value="UBIE_1"/>
    <property type="match status" value="1"/>
</dbReference>
<dbReference type="PROSITE" id="PS01184">
    <property type="entry name" value="UBIE_2"/>
    <property type="match status" value="1"/>
</dbReference>
<organism>
    <name type="scientific">Shewanella pealeana (strain ATCC 700345 / ANG-SQ1)</name>
    <dbReference type="NCBI Taxonomy" id="398579"/>
    <lineage>
        <taxon>Bacteria</taxon>
        <taxon>Pseudomonadati</taxon>
        <taxon>Pseudomonadota</taxon>
        <taxon>Gammaproteobacteria</taxon>
        <taxon>Alteromonadales</taxon>
        <taxon>Shewanellaceae</taxon>
        <taxon>Shewanella</taxon>
    </lineage>
</organism>
<keyword id="KW-0474">Menaquinone biosynthesis</keyword>
<keyword id="KW-0489">Methyltransferase</keyword>
<keyword id="KW-1185">Reference proteome</keyword>
<keyword id="KW-0949">S-adenosyl-L-methionine</keyword>
<keyword id="KW-0808">Transferase</keyword>
<keyword id="KW-0831">Ubiquinone biosynthesis</keyword>